<keyword id="KW-0210">Decarboxylase</keyword>
<keyword id="KW-0903">Direct protein sequencing</keyword>
<keyword id="KW-0456">Lyase</keyword>
<keyword id="KW-0663">Pyridoxal phosphate</keyword>
<keyword id="KW-1185">Reference proteome</keyword>
<comment type="function">
    <text evidence="1">Converts internalized glutamate to GABA and increases the internal pH. Involved in glutamate-dependent acid resistance (By similarity).</text>
</comment>
<comment type="catalytic activity">
    <reaction>
        <text>L-glutamate + H(+) = 4-aminobutanoate + CO2</text>
        <dbReference type="Rhea" id="RHEA:17785"/>
        <dbReference type="ChEBI" id="CHEBI:15378"/>
        <dbReference type="ChEBI" id="CHEBI:16526"/>
        <dbReference type="ChEBI" id="CHEBI:29985"/>
        <dbReference type="ChEBI" id="CHEBI:59888"/>
        <dbReference type="EC" id="4.1.1.15"/>
    </reaction>
</comment>
<comment type="cofactor">
    <cofactor evidence="1">
        <name>pyridoxal 5'-phosphate</name>
        <dbReference type="ChEBI" id="CHEBI:597326"/>
    </cofactor>
</comment>
<comment type="biophysicochemical properties">
    <phDependence>
        <text>Optimum pH is 4.7. Active at acidic pHs but inactive in the neutral pH range.</text>
    </phDependence>
    <temperatureDependence>
        <text>Active up to 70 degrees Celsius at pH 4.1.</text>
    </temperatureDependence>
</comment>
<comment type="similarity">
    <text evidence="2">Belongs to the group II decarboxylase family.</text>
</comment>
<accession>Q9CG20</accession>
<accession>O50645</accession>
<organism>
    <name type="scientific">Lactococcus lactis subsp. lactis (strain IL1403)</name>
    <name type="common">Streptococcus lactis</name>
    <dbReference type="NCBI Taxonomy" id="272623"/>
    <lineage>
        <taxon>Bacteria</taxon>
        <taxon>Bacillati</taxon>
        <taxon>Bacillota</taxon>
        <taxon>Bacilli</taxon>
        <taxon>Lactobacillales</taxon>
        <taxon>Streptococcaceae</taxon>
        <taxon>Lactococcus</taxon>
    </lineage>
</organism>
<evidence type="ECO:0000250" key="1"/>
<evidence type="ECO:0000305" key="2"/>
<dbReference type="EC" id="4.1.1.15"/>
<dbReference type="EMBL" id="AB010789">
    <property type="protein sequence ID" value="BAA24585.1"/>
    <property type="molecule type" value="Genomic_DNA"/>
</dbReference>
<dbReference type="EMBL" id="AE005176">
    <property type="protein sequence ID" value="AAK05388.1"/>
    <property type="molecule type" value="Genomic_DNA"/>
</dbReference>
<dbReference type="PIR" id="B86786">
    <property type="entry name" value="B86786"/>
</dbReference>
<dbReference type="RefSeq" id="NP_267446.1">
    <property type="nucleotide sequence ID" value="NC_002662.1"/>
</dbReference>
<dbReference type="RefSeq" id="WP_010905870.1">
    <property type="nucleotide sequence ID" value="NC_002662.1"/>
</dbReference>
<dbReference type="SMR" id="Q9CG20"/>
<dbReference type="PaxDb" id="272623-L123581"/>
<dbReference type="EnsemblBacteria" id="AAK05388">
    <property type="protein sequence ID" value="AAK05388"/>
    <property type="gene ID" value="L123581"/>
</dbReference>
<dbReference type="KEGG" id="lla:L123581"/>
<dbReference type="PATRIC" id="fig|272623.7.peg.1393"/>
<dbReference type="eggNOG" id="COG0076">
    <property type="taxonomic scope" value="Bacteria"/>
</dbReference>
<dbReference type="HOGENOM" id="CLU_019582_2_1_9"/>
<dbReference type="OrthoDB" id="9803665at2"/>
<dbReference type="Proteomes" id="UP000002196">
    <property type="component" value="Chromosome"/>
</dbReference>
<dbReference type="GO" id="GO:0005829">
    <property type="term" value="C:cytosol"/>
    <property type="evidence" value="ECO:0007669"/>
    <property type="project" value="TreeGrafter"/>
</dbReference>
<dbReference type="GO" id="GO:0004058">
    <property type="term" value="F:aromatic-L-amino-acid decarboxylase activity"/>
    <property type="evidence" value="ECO:0007669"/>
    <property type="project" value="UniProtKB-ARBA"/>
</dbReference>
<dbReference type="GO" id="GO:0004351">
    <property type="term" value="F:glutamate decarboxylase activity"/>
    <property type="evidence" value="ECO:0007669"/>
    <property type="project" value="UniProtKB-EC"/>
</dbReference>
<dbReference type="GO" id="GO:0030170">
    <property type="term" value="F:pyridoxal phosphate binding"/>
    <property type="evidence" value="ECO:0007669"/>
    <property type="project" value="InterPro"/>
</dbReference>
<dbReference type="GO" id="GO:0006538">
    <property type="term" value="P:glutamate catabolic process"/>
    <property type="evidence" value="ECO:0007669"/>
    <property type="project" value="TreeGrafter"/>
</dbReference>
<dbReference type="CDD" id="cd06450">
    <property type="entry name" value="DOPA_deC_like"/>
    <property type="match status" value="1"/>
</dbReference>
<dbReference type="FunFam" id="3.40.640.10:FF:000017">
    <property type="entry name" value="Glutamate decarboxylase"/>
    <property type="match status" value="1"/>
</dbReference>
<dbReference type="FunFam" id="4.10.280.50:FF:000001">
    <property type="entry name" value="Glutamate decarboxylase"/>
    <property type="match status" value="1"/>
</dbReference>
<dbReference type="Gene3D" id="3.90.1150.160">
    <property type="match status" value="1"/>
</dbReference>
<dbReference type="Gene3D" id="4.10.280.50">
    <property type="match status" value="1"/>
</dbReference>
<dbReference type="Gene3D" id="3.40.640.10">
    <property type="entry name" value="Type I PLP-dependent aspartate aminotransferase-like (Major domain)"/>
    <property type="match status" value="1"/>
</dbReference>
<dbReference type="InterPro" id="IPR010107">
    <property type="entry name" value="Glutamate_decarboxylase"/>
</dbReference>
<dbReference type="InterPro" id="IPR002129">
    <property type="entry name" value="PyrdxlP-dep_de-COase"/>
</dbReference>
<dbReference type="InterPro" id="IPR015424">
    <property type="entry name" value="PyrdxlP-dep_Trfase"/>
</dbReference>
<dbReference type="InterPro" id="IPR015421">
    <property type="entry name" value="PyrdxlP-dep_Trfase_major"/>
</dbReference>
<dbReference type="NCBIfam" id="TIGR01788">
    <property type="entry name" value="Glu-decarb-GAD"/>
    <property type="match status" value="1"/>
</dbReference>
<dbReference type="PANTHER" id="PTHR43321">
    <property type="entry name" value="GLUTAMATE DECARBOXYLASE"/>
    <property type="match status" value="1"/>
</dbReference>
<dbReference type="PANTHER" id="PTHR43321:SF3">
    <property type="entry name" value="GLUTAMATE DECARBOXYLASE"/>
    <property type="match status" value="1"/>
</dbReference>
<dbReference type="Pfam" id="PF00282">
    <property type="entry name" value="Pyridoxal_deC"/>
    <property type="match status" value="1"/>
</dbReference>
<dbReference type="SUPFAM" id="SSF53383">
    <property type="entry name" value="PLP-dependent transferases"/>
    <property type="match status" value="1"/>
</dbReference>
<name>DCE_LACLA</name>
<protein>
    <recommendedName>
        <fullName>Glutamate decarboxylase</fullName>
        <shortName>GAD</shortName>
        <ecNumber>4.1.1.15</ecNumber>
    </recommendedName>
</protein>
<gene>
    <name type="primary">gadB</name>
    <name type="ordered locus">LL1290</name>
    <name type="ORF">L123581</name>
</gene>
<sequence length="466" mass="53927">MLYGKENRDEAEFLEPIFGSESEQVDLPKYKLAQQSIEPRVAYQLVQDEMLDEGNARLNLATFCQTYMEPEAVKLMSQTLEKNAIDKSEYPRTTEIENRCVNMIADLWNASEKEKFMGTSTIGSSEACMLGGMAMKFSWRKRAEKLGLDINAKKPNLVISSGYQVCWEKFCIYWDIEMREVPMDKEHMSINLDKVMDYVDEYTIGVVGIMGITYTGRYDDIKALDNLIEEYNKQTDYKVYIHVDAASGGLYAPFVEPELEWDFRLKNVISINTSGHKYGLVYPGVGWVLWRDKKYLPEELIFKVSYLGGELPTMAINFSHSASQLIGQYYNFVRYGFDGYKAIHERTHKVAMFLAKEIEKTGMFEIMNDGSQLPIVCYKLKEDSNRGWNLYDLADRLLMKGWQVPAYPLPKNLENEIIQRLVIRADFGMNMAFNYVQDMQEAIEALNKAHILYHEEPENKTYGFTH</sequence>
<reference key="1">
    <citation type="journal article" date="1999" name="Microbiology">
        <title>Lactococcus lactis contains only one glutamate decarboxylase gene.</title>
        <authorList>
            <person name="Nomura M."/>
            <person name="Nakajima I."/>
            <person name="Fujita Y."/>
            <person name="Kobayashi M."/>
            <person name="Kimoto H."/>
            <person name="Suzuki I."/>
            <person name="Aso H."/>
        </authorList>
    </citation>
    <scope>NUCLEOTIDE SEQUENCE [GENOMIC DNA]</scope>
    <scope>PROTEIN SEQUENCE OF 1-15</scope>
    <scope>CHARACTERIZATION</scope>
    <source>
        <strain>01-7</strain>
    </source>
</reference>
<reference key="2">
    <citation type="journal article" date="2001" name="Genome Res.">
        <title>The complete genome sequence of the lactic acid bacterium Lactococcus lactis ssp. lactis IL1403.</title>
        <authorList>
            <person name="Bolotin A."/>
            <person name="Wincker P."/>
            <person name="Mauger S."/>
            <person name="Jaillon O."/>
            <person name="Malarme K."/>
            <person name="Weissenbach J."/>
            <person name="Ehrlich S.D."/>
            <person name="Sorokin A."/>
        </authorList>
    </citation>
    <scope>NUCLEOTIDE SEQUENCE [LARGE SCALE GENOMIC DNA]</scope>
    <source>
        <strain>IL1403</strain>
    </source>
</reference>
<proteinExistence type="evidence at protein level"/>
<feature type="chain" id="PRO_0000146986" description="Glutamate decarboxylase">
    <location>
        <begin position="1"/>
        <end position="466"/>
    </location>
</feature>
<feature type="modified residue" description="N6-(pyridoxal phosphate)lysine" evidence="1">
    <location>
        <position position="277"/>
    </location>
</feature>